<gene>
    <name evidence="1" type="primary">trmD</name>
    <name type="ordered locus">DSY2594</name>
</gene>
<keyword id="KW-0963">Cytoplasm</keyword>
<keyword id="KW-0489">Methyltransferase</keyword>
<keyword id="KW-1185">Reference proteome</keyword>
<keyword id="KW-0949">S-adenosyl-L-methionine</keyword>
<keyword id="KW-0808">Transferase</keyword>
<keyword id="KW-0819">tRNA processing</keyword>
<dbReference type="EC" id="2.1.1.228" evidence="1"/>
<dbReference type="EMBL" id="AP008230">
    <property type="protein sequence ID" value="BAE84383.1"/>
    <property type="molecule type" value="Genomic_DNA"/>
</dbReference>
<dbReference type="SMR" id="Q24UA9"/>
<dbReference type="STRING" id="138119.DSY2594"/>
<dbReference type="KEGG" id="dsy:DSY2594"/>
<dbReference type="eggNOG" id="COG0336">
    <property type="taxonomic scope" value="Bacteria"/>
</dbReference>
<dbReference type="HOGENOM" id="CLU_047363_0_1_9"/>
<dbReference type="Proteomes" id="UP000001946">
    <property type="component" value="Chromosome"/>
</dbReference>
<dbReference type="GO" id="GO:0005829">
    <property type="term" value="C:cytosol"/>
    <property type="evidence" value="ECO:0007669"/>
    <property type="project" value="TreeGrafter"/>
</dbReference>
<dbReference type="GO" id="GO:0052906">
    <property type="term" value="F:tRNA (guanine(37)-N1)-methyltransferase activity"/>
    <property type="evidence" value="ECO:0007669"/>
    <property type="project" value="UniProtKB-UniRule"/>
</dbReference>
<dbReference type="GO" id="GO:0002939">
    <property type="term" value="P:tRNA N1-guanine methylation"/>
    <property type="evidence" value="ECO:0007669"/>
    <property type="project" value="TreeGrafter"/>
</dbReference>
<dbReference type="CDD" id="cd18080">
    <property type="entry name" value="TrmD-like"/>
    <property type="match status" value="1"/>
</dbReference>
<dbReference type="FunFam" id="1.10.1270.20:FF:000001">
    <property type="entry name" value="tRNA (guanine-N(1)-)-methyltransferase"/>
    <property type="match status" value="1"/>
</dbReference>
<dbReference type="FunFam" id="3.40.1280.10:FF:000001">
    <property type="entry name" value="tRNA (guanine-N(1)-)-methyltransferase"/>
    <property type="match status" value="1"/>
</dbReference>
<dbReference type="Gene3D" id="3.40.1280.10">
    <property type="match status" value="1"/>
</dbReference>
<dbReference type="Gene3D" id="1.10.1270.20">
    <property type="entry name" value="tRNA(m1g37)methyltransferase, domain 2"/>
    <property type="match status" value="1"/>
</dbReference>
<dbReference type="HAMAP" id="MF_00605">
    <property type="entry name" value="TrmD"/>
    <property type="match status" value="1"/>
</dbReference>
<dbReference type="InterPro" id="IPR029028">
    <property type="entry name" value="Alpha/beta_knot_MTases"/>
</dbReference>
<dbReference type="InterPro" id="IPR023148">
    <property type="entry name" value="tRNA_m1G_MeTrfase_C_sf"/>
</dbReference>
<dbReference type="InterPro" id="IPR002649">
    <property type="entry name" value="tRNA_m1G_MeTrfase_TrmD"/>
</dbReference>
<dbReference type="InterPro" id="IPR029026">
    <property type="entry name" value="tRNA_m1G_MTases_N"/>
</dbReference>
<dbReference type="InterPro" id="IPR016009">
    <property type="entry name" value="tRNA_MeTrfase_TRMD/TRM10"/>
</dbReference>
<dbReference type="NCBIfam" id="NF000648">
    <property type="entry name" value="PRK00026.1"/>
    <property type="match status" value="1"/>
</dbReference>
<dbReference type="NCBIfam" id="TIGR00088">
    <property type="entry name" value="trmD"/>
    <property type="match status" value="1"/>
</dbReference>
<dbReference type="PANTHER" id="PTHR46417">
    <property type="entry name" value="TRNA (GUANINE-N(1)-)-METHYLTRANSFERASE"/>
    <property type="match status" value="1"/>
</dbReference>
<dbReference type="PANTHER" id="PTHR46417:SF1">
    <property type="entry name" value="TRNA (GUANINE-N(1)-)-METHYLTRANSFERASE"/>
    <property type="match status" value="1"/>
</dbReference>
<dbReference type="Pfam" id="PF01746">
    <property type="entry name" value="tRNA_m1G_MT"/>
    <property type="match status" value="1"/>
</dbReference>
<dbReference type="PIRSF" id="PIRSF000386">
    <property type="entry name" value="tRNA_mtase"/>
    <property type="match status" value="1"/>
</dbReference>
<dbReference type="SUPFAM" id="SSF75217">
    <property type="entry name" value="alpha/beta knot"/>
    <property type="match status" value="1"/>
</dbReference>
<sequence>MKFTVLTLFPEMFAPVHESILKRAQAAQLIEVSLINFRDYAASKHKNVDDVPYGGGAGMVLKPEPLFAALRDLPPSPGRRRIVLLSPQGEVFQQRKAEEWSRWDELVFICGHYEGFDERIRSLADEEVSLGDFVLTGGELAAMVMMDAVARLLPGVLGEKASAEEDSHSGGLLEYPHYTRPPVFEGMEVPDVLLSGHHRRIEEWRRKESLRRTFLKRPDLFAKVEFRAGDFNLLEELIREHPELAQERSRWEHLRPKPKKRR</sequence>
<name>TRMD_DESHY</name>
<comment type="function">
    <text evidence="1">Specifically methylates guanosine-37 in various tRNAs.</text>
</comment>
<comment type="catalytic activity">
    <reaction evidence="1">
        <text>guanosine(37) in tRNA + S-adenosyl-L-methionine = N(1)-methylguanosine(37) in tRNA + S-adenosyl-L-homocysteine + H(+)</text>
        <dbReference type="Rhea" id="RHEA:36899"/>
        <dbReference type="Rhea" id="RHEA-COMP:10145"/>
        <dbReference type="Rhea" id="RHEA-COMP:10147"/>
        <dbReference type="ChEBI" id="CHEBI:15378"/>
        <dbReference type="ChEBI" id="CHEBI:57856"/>
        <dbReference type="ChEBI" id="CHEBI:59789"/>
        <dbReference type="ChEBI" id="CHEBI:73542"/>
        <dbReference type="ChEBI" id="CHEBI:74269"/>
        <dbReference type="EC" id="2.1.1.228"/>
    </reaction>
</comment>
<comment type="subunit">
    <text evidence="1">Homodimer.</text>
</comment>
<comment type="subcellular location">
    <subcellularLocation>
        <location evidence="1">Cytoplasm</location>
    </subcellularLocation>
</comment>
<comment type="similarity">
    <text evidence="1">Belongs to the RNA methyltransferase TrmD family.</text>
</comment>
<feature type="chain" id="PRO_0000257414" description="tRNA (guanine-N(1)-)-methyltransferase">
    <location>
        <begin position="1"/>
        <end position="262"/>
    </location>
</feature>
<feature type="binding site" evidence="1">
    <location>
        <position position="111"/>
    </location>
    <ligand>
        <name>S-adenosyl-L-methionine</name>
        <dbReference type="ChEBI" id="CHEBI:59789"/>
    </ligand>
</feature>
<feature type="binding site" evidence="1">
    <location>
        <begin position="130"/>
        <end position="135"/>
    </location>
    <ligand>
        <name>S-adenosyl-L-methionine</name>
        <dbReference type="ChEBI" id="CHEBI:59789"/>
    </ligand>
</feature>
<accession>Q24UA9</accession>
<reference key="1">
    <citation type="journal article" date="2006" name="J. Bacteriol.">
        <title>Complete genome sequence of the dehalorespiring bacterium Desulfitobacterium hafniense Y51 and comparison with Dehalococcoides ethenogenes 195.</title>
        <authorList>
            <person name="Nonaka H."/>
            <person name="Keresztes G."/>
            <person name="Shinoda Y."/>
            <person name="Ikenaga Y."/>
            <person name="Abe M."/>
            <person name="Naito K."/>
            <person name="Inatomi K."/>
            <person name="Furukawa K."/>
            <person name="Inui M."/>
            <person name="Yukawa H."/>
        </authorList>
    </citation>
    <scope>NUCLEOTIDE SEQUENCE [LARGE SCALE GENOMIC DNA]</scope>
    <source>
        <strain>Y51</strain>
    </source>
</reference>
<protein>
    <recommendedName>
        <fullName evidence="1">tRNA (guanine-N(1)-)-methyltransferase</fullName>
        <ecNumber evidence="1">2.1.1.228</ecNumber>
    </recommendedName>
    <alternativeName>
        <fullName evidence="1">M1G-methyltransferase</fullName>
    </alternativeName>
    <alternativeName>
        <fullName evidence="1">tRNA [GM37] methyltransferase</fullName>
    </alternativeName>
</protein>
<evidence type="ECO:0000255" key="1">
    <source>
        <dbReference type="HAMAP-Rule" id="MF_00605"/>
    </source>
</evidence>
<proteinExistence type="inferred from homology"/>
<organism>
    <name type="scientific">Desulfitobacterium hafniense (strain Y51)</name>
    <dbReference type="NCBI Taxonomy" id="138119"/>
    <lineage>
        <taxon>Bacteria</taxon>
        <taxon>Bacillati</taxon>
        <taxon>Bacillota</taxon>
        <taxon>Clostridia</taxon>
        <taxon>Eubacteriales</taxon>
        <taxon>Desulfitobacteriaceae</taxon>
        <taxon>Desulfitobacterium</taxon>
    </lineage>
</organism>